<feature type="chain" id="PRO_0000328389" description="Protein OPI10 homolog">
    <location>
        <begin position="1"/>
        <end position="199"/>
    </location>
</feature>
<keyword id="KW-1185">Reference proteome</keyword>
<protein>
    <recommendedName>
        <fullName>Protein OPI10 homolog</fullName>
    </recommendedName>
</protein>
<accession>Q16RI1</accession>
<evidence type="ECO:0000305" key="1"/>
<name>OPI10_AEDAE</name>
<sequence length="199" mass="22279">MLNALGVICSGRLVQTDFQQISEVQYLINIPEADNVNHVVVFLTGTTPFAEGMAGAVYFSWPDPNAPPTWQFLGYISNSKPSAIFKISQLKKLDEMSNNSAVNVFGANLPISHIAQIGVSIEPESNLMQQTPATTTTDTYYQFGQKMVENFFNFVSSFSVTQSQMMPNPNEAFVPLSTVQTWFTNFQRRLQQNPSFWKS</sequence>
<proteinExistence type="inferred from homology"/>
<comment type="similarity">
    <text evidence="1">Belongs to the OPI10 family.</text>
</comment>
<gene>
    <name type="ORF">AAEL010953</name>
</gene>
<reference key="1">
    <citation type="journal article" date="2007" name="Science">
        <title>Genome sequence of Aedes aegypti, a major arbovirus vector.</title>
        <authorList>
            <person name="Nene V."/>
            <person name="Wortman J.R."/>
            <person name="Lawson D."/>
            <person name="Haas B.J."/>
            <person name="Kodira C.D."/>
            <person name="Tu Z.J."/>
            <person name="Loftus B.J."/>
            <person name="Xi Z."/>
            <person name="Megy K."/>
            <person name="Grabherr M."/>
            <person name="Ren Q."/>
            <person name="Zdobnov E.M."/>
            <person name="Lobo N.F."/>
            <person name="Campbell K.S."/>
            <person name="Brown S.E."/>
            <person name="Bonaldo M.F."/>
            <person name="Zhu J."/>
            <person name="Sinkins S.P."/>
            <person name="Hogenkamp D.G."/>
            <person name="Amedeo P."/>
            <person name="Arensburger P."/>
            <person name="Atkinson P.W."/>
            <person name="Bidwell S.L."/>
            <person name="Biedler J."/>
            <person name="Birney E."/>
            <person name="Bruggner R.V."/>
            <person name="Costas J."/>
            <person name="Coy M.R."/>
            <person name="Crabtree J."/>
            <person name="Crawford M."/>
            <person name="DeBruyn B."/>
            <person name="DeCaprio D."/>
            <person name="Eiglmeier K."/>
            <person name="Eisenstadt E."/>
            <person name="El-Dorry H."/>
            <person name="Gelbart W.M."/>
            <person name="Gomes S.L."/>
            <person name="Hammond M."/>
            <person name="Hannick L.I."/>
            <person name="Hogan J.R."/>
            <person name="Holmes M.H."/>
            <person name="Jaffe D."/>
            <person name="Johnston S.J."/>
            <person name="Kennedy R.C."/>
            <person name="Koo H."/>
            <person name="Kravitz S."/>
            <person name="Kriventseva E.V."/>
            <person name="Kulp D."/>
            <person name="Labutti K."/>
            <person name="Lee E."/>
            <person name="Li S."/>
            <person name="Lovin D.D."/>
            <person name="Mao C."/>
            <person name="Mauceli E."/>
            <person name="Menck C.F."/>
            <person name="Miller J.R."/>
            <person name="Montgomery P."/>
            <person name="Mori A."/>
            <person name="Nascimento A.L."/>
            <person name="Naveira H.F."/>
            <person name="Nusbaum C."/>
            <person name="O'Leary S.B."/>
            <person name="Orvis J."/>
            <person name="Pertea M."/>
            <person name="Quesneville H."/>
            <person name="Reidenbach K.R."/>
            <person name="Rogers Y.-H.C."/>
            <person name="Roth C.W."/>
            <person name="Schneider J.R."/>
            <person name="Schatz M."/>
            <person name="Shumway M."/>
            <person name="Stanke M."/>
            <person name="Stinson E.O."/>
            <person name="Tubio J.M.C."/>
            <person name="Vanzee J.P."/>
            <person name="Verjovski-Almeida S."/>
            <person name="Werner D."/>
            <person name="White O.R."/>
            <person name="Wyder S."/>
            <person name="Zeng Q."/>
            <person name="Zhao Q."/>
            <person name="Zhao Y."/>
            <person name="Hill C.A."/>
            <person name="Raikhel A.S."/>
            <person name="Soares M.B."/>
            <person name="Knudson D.L."/>
            <person name="Lee N.H."/>
            <person name="Galagan J."/>
            <person name="Salzberg S.L."/>
            <person name="Paulsen I.T."/>
            <person name="Dimopoulos G."/>
            <person name="Collins F.H."/>
            <person name="Bruce B."/>
            <person name="Fraser-Liggett C.M."/>
            <person name="Severson D.W."/>
        </authorList>
    </citation>
    <scope>NUCLEOTIDE SEQUENCE [LARGE SCALE GENOMIC DNA]</scope>
    <source>
        <strain>LVPib12</strain>
    </source>
</reference>
<organism>
    <name type="scientific">Aedes aegypti</name>
    <name type="common">Yellowfever mosquito</name>
    <name type="synonym">Culex aegypti</name>
    <dbReference type="NCBI Taxonomy" id="7159"/>
    <lineage>
        <taxon>Eukaryota</taxon>
        <taxon>Metazoa</taxon>
        <taxon>Ecdysozoa</taxon>
        <taxon>Arthropoda</taxon>
        <taxon>Hexapoda</taxon>
        <taxon>Insecta</taxon>
        <taxon>Pterygota</taxon>
        <taxon>Neoptera</taxon>
        <taxon>Endopterygota</taxon>
        <taxon>Diptera</taxon>
        <taxon>Nematocera</taxon>
        <taxon>Culicoidea</taxon>
        <taxon>Culicidae</taxon>
        <taxon>Culicinae</taxon>
        <taxon>Aedini</taxon>
        <taxon>Aedes</taxon>
        <taxon>Stegomyia</taxon>
    </lineage>
</organism>
<dbReference type="EMBL" id="CH477709">
    <property type="protein sequence ID" value="EAT37008.1"/>
    <property type="molecule type" value="Genomic_DNA"/>
</dbReference>
<dbReference type="SMR" id="Q16RI1"/>
<dbReference type="FunCoup" id="Q16RI1">
    <property type="interactions" value="1689"/>
</dbReference>
<dbReference type="STRING" id="7159.Q16RI1"/>
<dbReference type="PaxDb" id="7159-AAEL010953-PA"/>
<dbReference type="EnsemblMetazoa" id="AAEL010953-RA">
    <property type="protein sequence ID" value="AAEL010953-PA"/>
    <property type="gene ID" value="AAEL010953"/>
</dbReference>
<dbReference type="GeneID" id="5574132"/>
<dbReference type="KEGG" id="aag:5574132"/>
<dbReference type="VEuPathDB" id="VectorBase:AAEL010953"/>
<dbReference type="eggNOG" id="KOG4067">
    <property type="taxonomic scope" value="Eukaryota"/>
</dbReference>
<dbReference type="HOGENOM" id="CLU_084839_0_0_1"/>
<dbReference type="InParanoid" id="Q16RI1"/>
<dbReference type="OMA" id="WWAKFER"/>
<dbReference type="OrthoDB" id="10248398at2759"/>
<dbReference type="PhylomeDB" id="Q16RI1"/>
<dbReference type="Proteomes" id="UP000008820">
    <property type="component" value="Chromosome 3"/>
</dbReference>
<dbReference type="Proteomes" id="UP000682892">
    <property type="component" value="Unassembled WGS sequence"/>
</dbReference>
<dbReference type="GO" id="GO:0005829">
    <property type="term" value="C:cytosol"/>
    <property type="evidence" value="ECO:0007669"/>
    <property type="project" value="TreeGrafter"/>
</dbReference>
<dbReference type="GO" id="GO:0005634">
    <property type="term" value="C:nucleus"/>
    <property type="evidence" value="ECO:0007669"/>
    <property type="project" value="TreeGrafter"/>
</dbReference>
<dbReference type="GO" id="GO:0030544">
    <property type="term" value="F:Hsp70 protein binding"/>
    <property type="evidence" value="ECO:0007669"/>
    <property type="project" value="TreeGrafter"/>
</dbReference>
<dbReference type="GO" id="GO:0061608">
    <property type="term" value="F:nuclear import signal receptor activity"/>
    <property type="evidence" value="ECO:0007669"/>
    <property type="project" value="TreeGrafter"/>
</dbReference>
<dbReference type="GO" id="GO:0006606">
    <property type="term" value="P:protein import into nucleus"/>
    <property type="evidence" value="ECO:0007669"/>
    <property type="project" value="TreeGrafter"/>
</dbReference>
<dbReference type="InterPro" id="IPR048364">
    <property type="entry name" value="Hikeshi-like_C"/>
</dbReference>
<dbReference type="InterPro" id="IPR008493">
    <property type="entry name" value="Hikeshi-like_N"/>
</dbReference>
<dbReference type="InterPro" id="IPR031318">
    <property type="entry name" value="OPI10"/>
</dbReference>
<dbReference type="PANTHER" id="PTHR12925">
    <property type="entry name" value="HIKESHI FAMILY MEMBER"/>
    <property type="match status" value="1"/>
</dbReference>
<dbReference type="PANTHER" id="PTHR12925:SF0">
    <property type="entry name" value="PROTEIN HIKESHI"/>
    <property type="match status" value="1"/>
</dbReference>
<dbReference type="Pfam" id="PF21057">
    <property type="entry name" value="Hikeshi-like_C"/>
    <property type="match status" value="1"/>
</dbReference>
<dbReference type="Pfam" id="PF05603">
    <property type="entry name" value="Hikeshi-like_N"/>
    <property type="match status" value="1"/>
</dbReference>